<comment type="catalytic activity">
    <reaction evidence="2">
        <text>GTP + H2O = 7,8-dihydroneopterin 3'-triphosphate + formate + H(+)</text>
        <dbReference type="Rhea" id="RHEA:17473"/>
        <dbReference type="ChEBI" id="CHEBI:15377"/>
        <dbReference type="ChEBI" id="CHEBI:15378"/>
        <dbReference type="ChEBI" id="CHEBI:15740"/>
        <dbReference type="ChEBI" id="CHEBI:37565"/>
        <dbReference type="ChEBI" id="CHEBI:58462"/>
        <dbReference type="EC" id="3.5.4.16"/>
    </reaction>
</comment>
<comment type="pathway">
    <text evidence="2">Cofactor biosynthesis; 7,8-dihydroneopterin triphosphate biosynthesis; 7,8-dihydroneopterin triphosphate from GTP: step 1/1.</text>
</comment>
<comment type="subunit">
    <text evidence="1">Toroid-shaped homodecamer, composed of two pentamers of five dimers.</text>
</comment>
<comment type="similarity">
    <text evidence="2">Belongs to the GTP cyclohydrolase I family.</text>
</comment>
<gene>
    <name evidence="2" type="primary">folE</name>
    <name type="ordered locus">YpsIP31758_2470</name>
</gene>
<protein>
    <recommendedName>
        <fullName evidence="2">GTP cyclohydrolase 1</fullName>
        <ecNumber evidence="2">3.5.4.16</ecNumber>
    </recommendedName>
    <alternativeName>
        <fullName evidence="2">GTP cyclohydrolase I</fullName>
        <shortName evidence="2">GTP-CH-I</shortName>
    </alternativeName>
</protein>
<name>GCH1_YERP3</name>
<proteinExistence type="inferred from homology"/>
<evidence type="ECO:0000250" key="1"/>
<evidence type="ECO:0000255" key="2">
    <source>
        <dbReference type="HAMAP-Rule" id="MF_00223"/>
    </source>
</evidence>
<sequence length="220" mass="24714">MSSLSKEAELVHQALLARGLETPLRKPELDAETRKTRIQAHMTEVMHLLNLDLTDDSLADTPRRIAKMYVDEIFSGLDYENFPKITLIQNKMKVDEMVTVRDITLTSTCEHHFVTIDGKATVAYIPKDSVIGLSKINRIVQFFAQRPQVQERLTQQILLALQTLLGTNNVAVSIDAVHYCVKARGIRDATSATTTTSLGGLFKSSQNTRQEFLRAVRHHG</sequence>
<feature type="chain" id="PRO_1000058678" description="GTP cyclohydrolase 1">
    <location>
        <begin position="1"/>
        <end position="220"/>
    </location>
</feature>
<feature type="binding site" evidence="2">
    <location>
        <position position="109"/>
    </location>
    <ligand>
        <name>Zn(2+)</name>
        <dbReference type="ChEBI" id="CHEBI:29105"/>
    </ligand>
</feature>
<feature type="binding site" evidence="2">
    <location>
        <position position="112"/>
    </location>
    <ligand>
        <name>Zn(2+)</name>
        <dbReference type="ChEBI" id="CHEBI:29105"/>
    </ligand>
</feature>
<feature type="binding site" evidence="2">
    <location>
        <position position="180"/>
    </location>
    <ligand>
        <name>Zn(2+)</name>
        <dbReference type="ChEBI" id="CHEBI:29105"/>
    </ligand>
</feature>
<reference key="1">
    <citation type="journal article" date="2007" name="PLoS Genet.">
        <title>The complete genome sequence of Yersinia pseudotuberculosis IP31758, the causative agent of Far East scarlet-like fever.</title>
        <authorList>
            <person name="Eppinger M."/>
            <person name="Rosovitz M.J."/>
            <person name="Fricke W.F."/>
            <person name="Rasko D.A."/>
            <person name="Kokorina G."/>
            <person name="Fayolle C."/>
            <person name="Lindler L.E."/>
            <person name="Carniel E."/>
            <person name="Ravel J."/>
        </authorList>
    </citation>
    <scope>NUCLEOTIDE SEQUENCE [LARGE SCALE GENOMIC DNA]</scope>
    <source>
        <strain>IP 31758</strain>
    </source>
</reference>
<organism>
    <name type="scientific">Yersinia pseudotuberculosis serotype O:1b (strain IP 31758)</name>
    <dbReference type="NCBI Taxonomy" id="349747"/>
    <lineage>
        <taxon>Bacteria</taxon>
        <taxon>Pseudomonadati</taxon>
        <taxon>Pseudomonadota</taxon>
        <taxon>Gammaproteobacteria</taxon>
        <taxon>Enterobacterales</taxon>
        <taxon>Yersiniaceae</taxon>
        <taxon>Yersinia</taxon>
    </lineage>
</organism>
<accession>A7FJL1</accession>
<dbReference type="EC" id="3.5.4.16" evidence="2"/>
<dbReference type="EMBL" id="CP000720">
    <property type="protein sequence ID" value="ABS49180.1"/>
    <property type="molecule type" value="Genomic_DNA"/>
</dbReference>
<dbReference type="RefSeq" id="WP_002211960.1">
    <property type="nucleotide sequence ID" value="NC_009708.1"/>
</dbReference>
<dbReference type="SMR" id="A7FJL1"/>
<dbReference type="GeneID" id="57977063"/>
<dbReference type="KEGG" id="ypi:YpsIP31758_2470"/>
<dbReference type="HOGENOM" id="CLU_049768_3_2_6"/>
<dbReference type="UniPathway" id="UPA00848">
    <property type="reaction ID" value="UER00151"/>
</dbReference>
<dbReference type="Proteomes" id="UP000002412">
    <property type="component" value="Chromosome"/>
</dbReference>
<dbReference type="GO" id="GO:0005737">
    <property type="term" value="C:cytoplasm"/>
    <property type="evidence" value="ECO:0007669"/>
    <property type="project" value="TreeGrafter"/>
</dbReference>
<dbReference type="GO" id="GO:0005525">
    <property type="term" value="F:GTP binding"/>
    <property type="evidence" value="ECO:0007669"/>
    <property type="project" value="UniProtKB-KW"/>
</dbReference>
<dbReference type="GO" id="GO:0003934">
    <property type="term" value="F:GTP cyclohydrolase I activity"/>
    <property type="evidence" value="ECO:0007669"/>
    <property type="project" value="UniProtKB-UniRule"/>
</dbReference>
<dbReference type="GO" id="GO:0008270">
    <property type="term" value="F:zinc ion binding"/>
    <property type="evidence" value="ECO:0007669"/>
    <property type="project" value="UniProtKB-UniRule"/>
</dbReference>
<dbReference type="GO" id="GO:0006730">
    <property type="term" value="P:one-carbon metabolic process"/>
    <property type="evidence" value="ECO:0007669"/>
    <property type="project" value="UniProtKB-UniRule"/>
</dbReference>
<dbReference type="GO" id="GO:0006729">
    <property type="term" value="P:tetrahydrobiopterin biosynthetic process"/>
    <property type="evidence" value="ECO:0007669"/>
    <property type="project" value="TreeGrafter"/>
</dbReference>
<dbReference type="GO" id="GO:0046654">
    <property type="term" value="P:tetrahydrofolate biosynthetic process"/>
    <property type="evidence" value="ECO:0007669"/>
    <property type="project" value="UniProtKB-UniRule"/>
</dbReference>
<dbReference type="FunFam" id="1.10.286.10:FF:000002">
    <property type="entry name" value="GTP cyclohydrolase 1"/>
    <property type="match status" value="1"/>
</dbReference>
<dbReference type="FunFam" id="3.30.1130.10:FF:000001">
    <property type="entry name" value="GTP cyclohydrolase 1"/>
    <property type="match status" value="1"/>
</dbReference>
<dbReference type="Gene3D" id="1.10.286.10">
    <property type="match status" value="1"/>
</dbReference>
<dbReference type="Gene3D" id="3.30.1130.10">
    <property type="match status" value="1"/>
</dbReference>
<dbReference type="HAMAP" id="MF_00223">
    <property type="entry name" value="FolE"/>
    <property type="match status" value="1"/>
</dbReference>
<dbReference type="InterPro" id="IPR043133">
    <property type="entry name" value="GTP-CH-I_C/QueF"/>
</dbReference>
<dbReference type="InterPro" id="IPR043134">
    <property type="entry name" value="GTP-CH-I_N"/>
</dbReference>
<dbReference type="InterPro" id="IPR001474">
    <property type="entry name" value="GTP_CycHdrlase_I"/>
</dbReference>
<dbReference type="InterPro" id="IPR018234">
    <property type="entry name" value="GTP_CycHdrlase_I_CS"/>
</dbReference>
<dbReference type="InterPro" id="IPR020602">
    <property type="entry name" value="GTP_CycHdrlase_I_dom"/>
</dbReference>
<dbReference type="NCBIfam" id="TIGR00063">
    <property type="entry name" value="folE"/>
    <property type="match status" value="1"/>
</dbReference>
<dbReference type="NCBIfam" id="NF006824">
    <property type="entry name" value="PRK09347.1-1"/>
    <property type="match status" value="1"/>
</dbReference>
<dbReference type="NCBIfam" id="NF006825">
    <property type="entry name" value="PRK09347.1-2"/>
    <property type="match status" value="1"/>
</dbReference>
<dbReference type="NCBIfam" id="NF006826">
    <property type="entry name" value="PRK09347.1-3"/>
    <property type="match status" value="1"/>
</dbReference>
<dbReference type="PANTHER" id="PTHR11109:SF7">
    <property type="entry name" value="GTP CYCLOHYDROLASE 1"/>
    <property type="match status" value="1"/>
</dbReference>
<dbReference type="PANTHER" id="PTHR11109">
    <property type="entry name" value="GTP CYCLOHYDROLASE I"/>
    <property type="match status" value="1"/>
</dbReference>
<dbReference type="Pfam" id="PF01227">
    <property type="entry name" value="GTP_cyclohydroI"/>
    <property type="match status" value="1"/>
</dbReference>
<dbReference type="SUPFAM" id="SSF55620">
    <property type="entry name" value="Tetrahydrobiopterin biosynthesis enzymes-like"/>
    <property type="match status" value="1"/>
</dbReference>
<dbReference type="PROSITE" id="PS00859">
    <property type="entry name" value="GTP_CYCLOHYDROL_1_1"/>
    <property type="match status" value="1"/>
</dbReference>
<dbReference type="PROSITE" id="PS00860">
    <property type="entry name" value="GTP_CYCLOHYDROL_1_2"/>
    <property type="match status" value="1"/>
</dbReference>
<keyword id="KW-0342">GTP-binding</keyword>
<keyword id="KW-0378">Hydrolase</keyword>
<keyword id="KW-0479">Metal-binding</keyword>
<keyword id="KW-0547">Nucleotide-binding</keyword>
<keyword id="KW-0554">One-carbon metabolism</keyword>
<keyword id="KW-0862">Zinc</keyword>